<name>PNPA_PSEWB</name>
<accession>C1I201</accession>
<proteinExistence type="evidence at protein level"/>
<keyword id="KW-0058">Aromatic hydrocarbons catabolism</keyword>
<keyword id="KW-0274">FAD</keyword>
<keyword id="KW-0285">Flavoprotein</keyword>
<keyword id="KW-0503">Monooxygenase</keyword>
<keyword id="KW-0521">NADP</keyword>
<keyword id="KW-0560">Oxidoreductase</keyword>
<gene>
    <name type="primary">pnpA</name>
</gene>
<reference key="1">
    <citation type="journal article" date="2009" name="J. Bacteriol.">
        <title>Identification and characterization of catabolic para-nitrophenol 4-monooxygenase and para-benzoquinone reductase from Pseudomonas sp. strain WBC-3.</title>
        <authorList>
            <person name="Zhang J.J."/>
            <person name="Liu H."/>
            <person name="Xiao Y."/>
            <person name="Zhang X.E."/>
            <person name="Zhou N.Y."/>
        </authorList>
    </citation>
    <scope>NUCLEOTIDE SEQUENCE [GENOMIC DNA]</scope>
    <scope>FUNCTION</scope>
    <scope>CATALYTIC ACTIVITY</scope>
    <scope>DISRUPTION PHENOTYPE</scope>
    <scope>BIOPHYSICOCHEMICAL PROPERTIES</scope>
    <scope>SUBUNIT</scope>
</reference>
<organism>
    <name type="scientific">Pseudomonas sp. (strain WBC-3)</name>
    <dbReference type="NCBI Taxonomy" id="165468"/>
    <lineage>
        <taxon>Bacteria</taxon>
        <taxon>Pseudomonadati</taxon>
        <taxon>Pseudomonadota</taxon>
        <taxon>Gammaproteobacteria</taxon>
        <taxon>Pseudomonadales</taxon>
        <taxon>Pseudomonadaceae</taxon>
        <taxon>Pseudomonas</taxon>
    </lineage>
</organism>
<comment type="function">
    <text evidence="2">Involved in the degradation of para-nitrophenol (4-NP). Catalyzes oxidation of 4-nitrophenol (4-NP) at position 4 with concomitant removal of the nitro group as nitrite and production of para-benzoquinone.</text>
</comment>
<comment type="catalytic activity">
    <reaction evidence="2">
        <text>4-nitrophenol + NADPH + O2 + H(+) = 1,4-benzoquinone + nitrite + NADP(+) + H2O</text>
        <dbReference type="Rhea" id="RHEA:34327"/>
        <dbReference type="ChEBI" id="CHEBI:15377"/>
        <dbReference type="ChEBI" id="CHEBI:15378"/>
        <dbReference type="ChEBI" id="CHEBI:15379"/>
        <dbReference type="ChEBI" id="CHEBI:16301"/>
        <dbReference type="ChEBI" id="CHEBI:16509"/>
        <dbReference type="ChEBI" id="CHEBI:57783"/>
        <dbReference type="ChEBI" id="CHEBI:57917"/>
        <dbReference type="ChEBI" id="CHEBI:58349"/>
        <dbReference type="EC" id="1.14.13.167"/>
    </reaction>
</comment>
<comment type="cofactor">
    <cofactor evidence="1">
        <name>FAD</name>
        <dbReference type="ChEBI" id="CHEBI:57692"/>
    </cofactor>
</comment>
<comment type="biophysicochemical properties">
    <kinetics>
        <KM evidence="2">12 uM for 4-NP</KM>
        <KM evidence="2">137.4 uM for NADP</KM>
    </kinetics>
</comment>
<comment type="pathway">
    <text>Xenobiotic degradation; 4-nitrophenol degradation.</text>
</comment>
<comment type="subunit">
    <text evidence="2">Monomer.</text>
</comment>
<comment type="disruption phenotype">
    <text evidence="2">Cells lacking this gene are not able to grow on 4-NP.</text>
</comment>
<comment type="similarity">
    <text evidence="3">Belongs to the PheA/TfdB FAD monooxygenase family.</text>
</comment>
<protein>
    <recommendedName>
        <fullName>Para-nitrophenol 4-monooxygenase</fullName>
        <ecNumber>1.14.13.167</ecNumber>
    </recommendedName>
</protein>
<sequence length="403" mass="44867">METLDGVVVVGGGPVGLLTALKLGKAGIKVVVLEAEPGVSPSPRAVAYMPPTAAALDRFGLLQDIRKRAVMCPDFAYRHGNGELIAKMDWSVLSQDTQYPYMLLLGQNHVSNVIFQHLRELPNVEIRWNHRVEEVDQDDAYVTIETSSPGGTSRLRARWLAATDGARSTVRQKIGLTFDGITWDERLVATNVFYDFSLHGYSRANFVHDPVDWAVVVQLDKTGLWRVCYGEDASLSDAEVRRRLPERFKRLLPGAPTPDQYRVDHLNPYRVHQRCAAEFRRGRVVLAGDAAHATNPMGGLGLSGGVLDAEHLAEALIAVIKNGASTKTLDEYSIDRRKVFLEFTSPTATANFTWMKESDPAQRIRDDAMFKEAGTDRAVMRQFLLDLEKLNGRRVIEKKLKAA</sequence>
<dbReference type="EC" id="1.14.13.167"/>
<dbReference type="EMBL" id="EF577044">
    <property type="protein sequence ID" value="ABU50908.1"/>
    <property type="molecule type" value="Genomic_DNA"/>
</dbReference>
<dbReference type="SMR" id="C1I201"/>
<dbReference type="KEGG" id="ag:ABU50908"/>
<dbReference type="BioCyc" id="MetaCyc:MONOMER-13030"/>
<dbReference type="BRENDA" id="1.14.13.166">
    <property type="organism ID" value="5085"/>
</dbReference>
<dbReference type="BRENDA" id="1.14.13.167">
    <property type="organism ID" value="5085"/>
</dbReference>
<dbReference type="SABIO-RK" id="C1I201"/>
<dbReference type="UniPathway" id="UPA01030"/>
<dbReference type="GO" id="GO:0008688">
    <property type="term" value="F:3-(3-hydroxyphenyl)propionate hydroxylase activity"/>
    <property type="evidence" value="ECO:0007669"/>
    <property type="project" value="TreeGrafter"/>
</dbReference>
<dbReference type="GO" id="GO:0018632">
    <property type="term" value="F:4-nitrophenol 4-monooxygenase activity"/>
    <property type="evidence" value="ECO:0007669"/>
    <property type="project" value="UniProtKB-EC"/>
</dbReference>
<dbReference type="GO" id="GO:0071949">
    <property type="term" value="F:FAD binding"/>
    <property type="evidence" value="ECO:0007669"/>
    <property type="project" value="InterPro"/>
</dbReference>
<dbReference type="GO" id="GO:0004497">
    <property type="term" value="F:monooxygenase activity"/>
    <property type="evidence" value="ECO:0000314"/>
    <property type="project" value="UniProtKB"/>
</dbReference>
<dbReference type="GO" id="GO:0019622">
    <property type="term" value="P:3-(3-hydroxy)phenylpropionate catabolic process"/>
    <property type="evidence" value="ECO:0007669"/>
    <property type="project" value="TreeGrafter"/>
</dbReference>
<dbReference type="GO" id="GO:0046196">
    <property type="term" value="P:4-nitrophenol catabolic process"/>
    <property type="evidence" value="ECO:0007669"/>
    <property type="project" value="UniProtKB-UniPathway"/>
</dbReference>
<dbReference type="GO" id="GO:0006091">
    <property type="term" value="P:generation of precursor metabolites and energy"/>
    <property type="evidence" value="ECO:0000314"/>
    <property type="project" value="UniProtKB"/>
</dbReference>
<dbReference type="Gene3D" id="3.30.70.2450">
    <property type="match status" value="1"/>
</dbReference>
<dbReference type="Gene3D" id="3.50.50.60">
    <property type="entry name" value="FAD/NAD(P)-binding domain"/>
    <property type="match status" value="1"/>
</dbReference>
<dbReference type="InterPro" id="IPR002938">
    <property type="entry name" value="FAD-bd"/>
</dbReference>
<dbReference type="InterPro" id="IPR036188">
    <property type="entry name" value="FAD/NAD-bd_sf"/>
</dbReference>
<dbReference type="InterPro" id="IPR050631">
    <property type="entry name" value="PheA/TfdB_FAD_monoxygenase"/>
</dbReference>
<dbReference type="PANTHER" id="PTHR43476">
    <property type="entry name" value="3-(3-HYDROXY-PHENYL)PROPIONATE/3-HYDROXYCINNAMIC ACID HYDROXYLASE"/>
    <property type="match status" value="1"/>
</dbReference>
<dbReference type="PANTHER" id="PTHR43476:SF3">
    <property type="entry name" value="FAD-BINDING MONOOXYGENASE"/>
    <property type="match status" value="1"/>
</dbReference>
<dbReference type="Pfam" id="PF01494">
    <property type="entry name" value="FAD_binding_3"/>
    <property type="match status" value="1"/>
</dbReference>
<dbReference type="PRINTS" id="PR00420">
    <property type="entry name" value="RNGMNOXGNASE"/>
</dbReference>
<dbReference type="SUPFAM" id="SSF51905">
    <property type="entry name" value="FAD/NAD(P)-binding domain"/>
    <property type="match status" value="1"/>
</dbReference>
<evidence type="ECO:0000250" key="1"/>
<evidence type="ECO:0000269" key="2">
    <source>
    </source>
</evidence>
<evidence type="ECO:0000305" key="3"/>
<feature type="chain" id="PRO_0000422666" description="Para-nitrophenol 4-monooxygenase">
    <location>
        <begin position="1"/>
        <end position="403"/>
    </location>
</feature>
<feature type="binding site" evidence="1">
    <location>
        <begin position="6"/>
        <end position="35"/>
    </location>
    <ligand>
        <name>FAD</name>
        <dbReference type="ChEBI" id="CHEBI:57692"/>
    </ligand>
</feature>
<feature type="binding site" evidence="1">
    <location>
        <begin position="279"/>
        <end position="289"/>
    </location>
    <ligand>
        <name>FAD</name>
        <dbReference type="ChEBI" id="CHEBI:57692"/>
    </ligand>
</feature>